<gene>
    <name type="primary">prkC</name>
    <name type="ordered locus">NWMN_1130</name>
</gene>
<accession>A6QGC0</accession>
<comment type="function">
    <text evidence="7">Probable protein kinase that is responsible for triggering spore germination in response to muropeptides, signaling bacteria to exit dormancy. PrkC is thus a germination receptor that binds peptidoglycan fragments containing either m-Dpm (meso-diaminopimelate) or L-lys, which act as spore germinants. Probably autophosphorylates and phosphorylates FusA (EF-G, elongation factor G); the latter modification is likely necessary for germination in response to peptidoglycan.</text>
</comment>
<comment type="catalytic activity">
    <reaction>
        <text>L-seryl-[protein] + ATP = O-phospho-L-seryl-[protein] + ADP + H(+)</text>
        <dbReference type="Rhea" id="RHEA:17989"/>
        <dbReference type="Rhea" id="RHEA-COMP:9863"/>
        <dbReference type="Rhea" id="RHEA-COMP:11604"/>
        <dbReference type="ChEBI" id="CHEBI:15378"/>
        <dbReference type="ChEBI" id="CHEBI:29999"/>
        <dbReference type="ChEBI" id="CHEBI:30616"/>
        <dbReference type="ChEBI" id="CHEBI:83421"/>
        <dbReference type="ChEBI" id="CHEBI:456216"/>
        <dbReference type="EC" id="2.7.11.1"/>
    </reaction>
</comment>
<comment type="catalytic activity">
    <reaction>
        <text>L-threonyl-[protein] + ATP = O-phospho-L-threonyl-[protein] + ADP + H(+)</text>
        <dbReference type="Rhea" id="RHEA:46608"/>
        <dbReference type="Rhea" id="RHEA-COMP:11060"/>
        <dbReference type="Rhea" id="RHEA-COMP:11605"/>
        <dbReference type="ChEBI" id="CHEBI:15378"/>
        <dbReference type="ChEBI" id="CHEBI:30013"/>
        <dbReference type="ChEBI" id="CHEBI:30616"/>
        <dbReference type="ChEBI" id="CHEBI:61977"/>
        <dbReference type="ChEBI" id="CHEBI:456216"/>
        <dbReference type="EC" id="2.7.11.1"/>
    </reaction>
</comment>
<comment type="subunit">
    <text evidence="1">Homodimer.</text>
</comment>
<comment type="subcellular location">
    <subcellularLocation>
        <location>Spore membrane</location>
        <topology>Single-pass type II membrane protein</topology>
    </subcellularLocation>
    <text evidence="1">Is associated with the inner membrane of the spore.</text>
</comment>
<comment type="domain">
    <text>The C-terminal extracellular domain containing the PASTA repeats binds peptidoglycan.</text>
</comment>
<comment type="miscellaneous">
    <text>PubMed:18984160 shows that peptidoglycan fragments serve as a novel mechanism of interspecies bacterial signaling that likely indicates the presence of growing bacteria and thus serve as a signal for dormant cells that growth-promoting conditions exist.</text>
</comment>
<comment type="similarity">
    <text evidence="3">Belongs to the protein kinase superfamily. Ser/Thr protein kinase family.</text>
</comment>
<organism>
    <name type="scientific">Staphylococcus aureus (strain Newman)</name>
    <dbReference type="NCBI Taxonomy" id="426430"/>
    <lineage>
        <taxon>Bacteria</taxon>
        <taxon>Bacillati</taxon>
        <taxon>Bacillota</taxon>
        <taxon>Bacilli</taxon>
        <taxon>Bacillales</taxon>
        <taxon>Staphylococcaceae</taxon>
        <taxon>Staphylococcus</taxon>
    </lineage>
</organism>
<name>PRKC_STAAE</name>
<reference key="1">
    <citation type="journal article" date="2008" name="J. Bacteriol.">
        <title>Genome sequence of Staphylococcus aureus strain Newman and comparative analysis of staphylococcal genomes: polymorphism and evolution of two major pathogenicity islands.</title>
        <authorList>
            <person name="Baba T."/>
            <person name="Bae T."/>
            <person name="Schneewind O."/>
            <person name="Takeuchi F."/>
            <person name="Hiramatsu K."/>
        </authorList>
    </citation>
    <scope>NUCLEOTIDE SEQUENCE [LARGE SCALE GENOMIC DNA]</scope>
    <source>
        <strain>Newman</strain>
    </source>
</reference>
<reference key="2">
    <citation type="journal article" date="2008" name="Cell">
        <title>A eukaryotic-like Ser/Thr kinase signals bacteria to exit dormancy in response to peptidoglycan fragments.</title>
        <authorList>
            <person name="Shah I.M."/>
            <person name="Laaberki M.H."/>
            <person name="Popham D.L."/>
            <person name="Dworkin J."/>
        </authorList>
    </citation>
    <scope>FUNCTION IN PEPTIDOGLYCAN-DEPENDENT GERMINATION</scope>
    <scope>PEPTIDOGLYCAN-BINDING</scope>
</reference>
<proteinExistence type="evidence at protein level"/>
<protein>
    <recommendedName>
        <fullName>Serine/threonine-protein kinase PrkC</fullName>
        <shortName>Ser/Thr-protein kinase PrkC</shortName>
        <ecNumber>2.7.11.1</ecNumber>
    </recommendedName>
</protein>
<sequence>MIGKIINERYKIVDKLGGGGMSTVYLAEDTILNIKVAIKAIFIPPREKEETLKRFEREVHNSSQLSHQNIVSMIDVDEEDDCYYLVMEYIEGPTLSEYIESHGPLSVDTAINFTNQILDGIKHAHDMRIVHRDIKPQNILIDSNKTLKIFDFGIAKALSETSLTQTNHVLGTVQYFSPEQAKGEATDECTDIYSIGIVLYEMLVGEPPFNGETAVSIAIKHIQDSVPNVTTDVRKDIPQSLSNVILRATEKDKANRYKTIQEMKDDLSSVLHENRANEDVYELDKMKTIAVPLKKEDLAKHISEHKSNQPKRETTQVPIVNGPAHHQQFQKPEGTVYEPKPKKKSTRKIVLLSLIFSLLMIALVSFVAMAMFGNKYEETPDVIGKSVKEAEQIFNKNNLKLGKISRSYSDKYPENEIIKTTPNTGERVERGDSVDVVISKGPEKVKMPNVIGLPKEEALQKLKSLGLKDVTIEKVYNNQAPKGYIANQSVTANTEIAIHDSNIKLYESLGIKQVYVEDFEHKSFSKAKKALEEKGFKVESKEEYSDDIDEGDVISQSPKGKSVDEGSTISFVVSKGKKSDSSDVKTTTESVDVPYTGKNDKSQKVKVYIKDKDNDGSTEKGSFDITSDQRIDIPLRIEKGKTASYIVKVDGKTVAEKEVSYDDV</sequence>
<evidence type="ECO:0000250" key="1"/>
<evidence type="ECO:0000255" key="2"/>
<evidence type="ECO:0000255" key="3">
    <source>
        <dbReference type="PROSITE-ProRule" id="PRU00159"/>
    </source>
</evidence>
<evidence type="ECO:0000255" key="4">
    <source>
        <dbReference type="PROSITE-ProRule" id="PRU00528"/>
    </source>
</evidence>
<evidence type="ECO:0000255" key="5">
    <source>
        <dbReference type="PROSITE-ProRule" id="PRU10027"/>
    </source>
</evidence>
<evidence type="ECO:0000256" key="6">
    <source>
        <dbReference type="SAM" id="MobiDB-lite"/>
    </source>
</evidence>
<evidence type="ECO:0000269" key="7">
    <source>
    </source>
</evidence>
<dbReference type="EC" id="2.7.11.1"/>
<dbReference type="EMBL" id="AP009351">
    <property type="protein sequence ID" value="BAF67402.1"/>
    <property type="molecule type" value="Genomic_DNA"/>
</dbReference>
<dbReference type="SMR" id="A6QGC0"/>
<dbReference type="KEGG" id="sae:NWMN_1130"/>
<dbReference type="HOGENOM" id="CLU_000288_135_2_9"/>
<dbReference type="Proteomes" id="UP000006386">
    <property type="component" value="Chromosome"/>
</dbReference>
<dbReference type="GO" id="GO:0005886">
    <property type="term" value="C:plasma membrane"/>
    <property type="evidence" value="ECO:0000250"/>
    <property type="project" value="UniProtKB"/>
</dbReference>
<dbReference type="GO" id="GO:0005524">
    <property type="term" value="F:ATP binding"/>
    <property type="evidence" value="ECO:0007669"/>
    <property type="project" value="UniProtKB-KW"/>
</dbReference>
<dbReference type="GO" id="GO:0042834">
    <property type="term" value="F:peptidoglycan binding"/>
    <property type="evidence" value="ECO:0000314"/>
    <property type="project" value="UniProtKB"/>
</dbReference>
<dbReference type="GO" id="GO:0106310">
    <property type="term" value="F:protein serine kinase activity"/>
    <property type="evidence" value="ECO:0007669"/>
    <property type="project" value="RHEA"/>
</dbReference>
<dbReference type="GO" id="GO:0004674">
    <property type="term" value="F:protein serine/threonine kinase activity"/>
    <property type="evidence" value="ECO:0000250"/>
    <property type="project" value="UniProtKB"/>
</dbReference>
<dbReference type="GO" id="GO:0071224">
    <property type="term" value="P:cellular response to peptidoglycan"/>
    <property type="evidence" value="ECO:0000316"/>
    <property type="project" value="UniProtKB"/>
</dbReference>
<dbReference type="GO" id="GO:0006468">
    <property type="term" value="P:protein phosphorylation"/>
    <property type="evidence" value="ECO:0000250"/>
    <property type="project" value="UniProtKB"/>
</dbReference>
<dbReference type="GO" id="GO:0007165">
    <property type="term" value="P:signal transduction"/>
    <property type="evidence" value="ECO:0000316"/>
    <property type="project" value="UniProtKB"/>
</dbReference>
<dbReference type="GO" id="GO:0009847">
    <property type="term" value="P:spore germination"/>
    <property type="evidence" value="ECO:0000316"/>
    <property type="project" value="UniProtKB"/>
</dbReference>
<dbReference type="CDD" id="cd06577">
    <property type="entry name" value="PASTA_pknB"/>
    <property type="match status" value="3"/>
</dbReference>
<dbReference type="CDD" id="cd14014">
    <property type="entry name" value="STKc_PknB_like"/>
    <property type="match status" value="1"/>
</dbReference>
<dbReference type="FunFam" id="1.10.510.10:FF:000021">
    <property type="entry name" value="Serine/threonine protein kinase"/>
    <property type="match status" value="1"/>
</dbReference>
<dbReference type="FunFam" id="3.30.200.20:FF:000035">
    <property type="entry name" value="Serine/threonine protein kinase Stk1"/>
    <property type="match status" value="1"/>
</dbReference>
<dbReference type="Gene3D" id="2.60.40.2560">
    <property type="match status" value="1"/>
</dbReference>
<dbReference type="Gene3D" id="3.30.10.20">
    <property type="match status" value="3"/>
</dbReference>
<dbReference type="Gene3D" id="3.30.200.20">
    <property type="entry name" value="Phosphorylase Kinase, domain 1"/>
    <property type="match status" value="1"/>
</dbReference>
<dbReference type="Gene3D" id="1.10.510.10">
    <property type="entry name" value="Transferase(Phosphotransferase) domain 1"/>
    <property type="match status" value="1"/>
</dbReference>
<dbReference type="InterPro" id="IPR011009">
    <property type="entry name" value="Kinase-like_dom_sf"/>
</dbReference>
<dbReference type="InterPro" id="IPR005543">
    <property type="entry name" value="PASTA_dom"/>
</dbReference>
<dbReference type="InterPro" id="IPR000719">
    <property type="entry name" value="Prot_kinase_dom"/>
</dbReference>
<dbReference type="InterPro" id="IPR017441">
    <property type="entry name" value="Protein_kinase_ATP_BS"/>
</dbReference>
<dbReference type="InterPro" id="IPR008271">
    <property type="entry name" value="Ser/Thr_kinase_AS"/>
</dbReference>
<dbReference type="NCBIfam" id="NF033483">
    <property type="entry name" value="PknB_PASTA_kin"/>
    <property type="match status" value="1"/>
</dbReference>
<dbReference type="PANTHER" id="PTHR43289">
    <property type="entry name" value="MITOGEN-ACTIVATED PROTEIN KINASE KINASE KINASE 20-RELATED"/>
    <property type="match status" value="1"/>
</dbReference>
<dbReference type="PANTHER" id="PTHR43289:SF34">
    <property type="entry name" value="SERINE_THREONINE-PROTEIN KINASE YBDM-RELATED"/>
    <property type="match status" value="1"/>
</dbReference>
<dbReference type="Pfam" id="PF03793">
    <property type="entry name" value="PASTA"/>
    <property type="match status" value="3"/>
</dbReference>
<dbReference type="Pfam" id="PF00069">
    <property type="entry name" value="Pkinase"/>
    <property type="match status" value="1"/>
</dbReference>
<dbReference type="Pfam" id="PF21160">
    <property type="entry name" value="PrkC-like_PASTA-like"/>
    <property type="match status" value="1"/>
</dbReference>
<dbReference type="SMART" id="SM00740">
    <property type="entry name" value="PASTA"/>
    <property type="match status" value="3"/>
</dbReference>
<dbReference type="SMART" id="SM00220">
    <property type="entry name" value="S_TKc"/>
    <property type="match status" value="1"/>
</dbReference>
<dbReference type="SUPFAM" id="SSF56112">
    <property type="entry name" value="Protein kinase-like (PK-like)"/>
    <property type="match status" value="1"/>
</dbReference>
<dbReference type="PROSITE" id="PS51178">
    <property type="entry name" value="PASTA"/>
    <property type="match status" value="3"/>
</dbReference>
<dbReference type="PROSITE" id="PS00107">
    <property type="entry name" value="PROTEIN_KINASE_ATP"/>
    <property type="match status" value="1"/>
</dbReference>
<dbReference type="PROSITE" id="PS50011">
    <property type="entry name" value="PROTEIN_KINASE_DOM"/>
    <property type="match status" value="1"/>
</dbReference>
<dbReference type="PROSITE" id="PS00108">
    <property type="entry name" value="PROTEIN_KINASE_ST"/>
    <property type="match status" value="1"/>
</dbReference>
<feature type="chain" id="PRO_0000398662" description="Serine/threonine-protein kinase PrkC">
    <location>
        <begin position="1"/>
        <end position="664"/>
    </location>
</feature>
<feature type="topological domain" description="Cytoplasmic" evidence="2">
    <location>
        <begin position="1"/>
        <end position="348"/>
    </location>
</feature>
<feature type="transmembrane region" description="Helical" evidence="2">
    <location>
        <begin position="349"/>
        <end position="369"/>
    </location>
</feature>
<feature type="topological domain" description="Extracellular" evidence="2">
    <location>
        <begin position="370"/>
        <end position="664"/>
    </location>
</feature>
<feature type="domain" description="Protein kinase" evidence="3">
    <location>
        <begin position="10"/>
        <end position="271"/>
    </location>
</feature>
<feature type="domain" description="PASTA 1" evidence="4">
    <location>
        <begin position="373"/>
        <end position="440"/>
    </location>
</feature>
<feature type="domain" description="PASTA 2" evidence="4">
    <location>
        <begin position="441"/>
        <end position="509"/>
    </location>
</feature>
<feature type="domain" description="PASTA 3" evidence="4">
    <location>
        <begin position="510"/>
        <end position="575"/>
    </location>
</feature>
<feature type="region of interest" description="Disordered" evidence="6">
    <location>
        <begin position="541"/>
        <end position="565"/>
    </location>
</feature>
<feature type="compositionally biased region" description="Polar residues" evidence="6">
    <location>
        <begin position="554"/>
        <end position="565"/>
    </location>
</feature>
<feature type="active site" description="Proton acceptor" evidence="3 5">
    <location>
        <position position="133"/>
    </location>
</feature>
<feature type="binding site" evidence="3">
    <location>
        <begin position="16"/>
        <end position="24"/>
    </location>
    <ligand>
        <name>ATP</name>
        <dbReference type="ChEBI" id="CHEBI:30616"/>
    </ligand>
</feature>
<feature type="binding site" evidence="3">
    <location>
        <position position="39"/>
    </location>
    <ligand>
        <name>ATP</name>
        <dbReference type="ChEBI" id="CHEBI:30616"/>
    </ligand>
</feature>
<feature type="site" description="Required for activity" evidence="1">
    <location>
        <position position="39"/>
    </location>
</feature>
<feature type="modified residue" description="Phosphothreonine; by autocatalysis" evidence="1">
    <location>
        <position position="161"/>
    </location>
</feature>
<feature type="modified residue" description="Phosphothreonine; by autocatalysis" evidence="1">
    <location>
        <position position="164"/>
    </location>
</feature>
<feature type="modified residue" description="Phosphothreonine; by autocatalysis" evidence="1">
    <location>
        <position position="166"/>
    </location>
</feature>
<keyword id="KW-0067">ATP-binding</keyword>
<keyword id="KW-0309">Germination</keyword>
<keyword id="KW-0418">Kinase</keyword>
<keyword id="KW-0472">Membrane</keyword>
<keyword id="KW-0547">Nucleotide-binding</keyword>
<keyword id="KW-0597">Phosphoprotein</keyword>
<keyword id="KW-0677">Repeat</keyword>
<keyword id="KW-0723">Serine/threonine-protein kinase</keyword>
<keyword id="KW-0735">Signal-anchor</keyword>
<keyword id="KW-0808">Transferase</keyword>
<keyword id="KW-0812">Transmembrane</keyword>
<keyword id="KW-1133">Transmembrane helix</keyword>